<reference key="1">
    <citation type="journal article" date="2002" name="Nature">
        <title>The genome sequence of Schizosaccharomyces pombe.</title>
        <authorList>
            <person name="Wood V."/>
            <person name="Gwilliam R."/>
            <person name="Rajandream M.A."/>
            <person name="Lyne M.H."/>
            <person name="Lyne R."/>
            <person name="Stewart A."/>
            <person name="Sgouros J.G."/>
            <person name="Peat N."/>
            <person name="Hayles J."/>
            <person name="Baker S.G."/>
            <person name="Basham D."/>
            <person name="Bowman S."/>
            <person name="Brooks K."/>
            <person name="Brown D."/>
            <person name="Brown S."/>
            <person name="Chillingworth T."/>
            <person name="Churcher C.M."/>
            <person name="Collins M."/>
            <person name="Connor R."/>
            <person name="Cronin A."/>
            <person name="Davis P."/>
            <person name="Feltwell T."/>
            <person name="Fraser A."/>
            <person name="Gentles S."/>
            <person name="Goble A."/>
            <person name="Hamlin N."/>
            <person name="Harris D.E."/>
            <person name="Hidalgo J."/>
            <person name="Hodgson G."/>
            <person name="Holroyd S."/>
            <person name="Hornsby T."/>
            <person name="Howarth S."/>
            <person name="Huckle E.J."/>
            <person name="Hunt S."/>
            <person name="Jagels K."/>
            <person name="James K.D."/>
            <person name="Jones L."/>
            <person name="Jones M."/>
            <person name="Leather S."/>
            <person name="McDonald S."/>
            <person name="McLean J."/>
            <person name="Mooney P."/>
            <person name="Moule S."/>
            <person name="Mungall K.L."/>
            <person name="Murphy L.D."/>
            <person name="Niblett D."/>
            <person name="Odell C."/>
            <person name="Oliver K."/>
            <person name="O'Neil S."/>
            <person name="Pearson D."/>
            <person name="Quail M.A."/>
            <person name="Rabbinowitsch E."/>
            <person name="Rutherford K.M."/>
            <person name="Rutter S."/>
            <person name="Saunders D."/>
            <person name="Seeger K."/>
            <person name="Sharp S."/>
            <person name="Skelton J."/>
            <person name="Simmonds M.N."/>
            <person name="Squares R."/>
            <person name="Squares S."/>
            <person name="Stevens K."/>
            <person name="Taylor K."/>
            <person name="Taylor R.G."/>
            <person name="Tivey A."/>
            <person name="Walsh S.V."/>
            <person name="Warren T."/>
            <person name="Whitehead S."/>
            <person name="Woodward J.R."/>
            <person name="Volckaert G."/>
            <person name="Aert R."/>
            <person name="Robben J."/>
            <person name="Grymonprez B."/>
            <person name="Weltjens I."/>
            <person name="Vanstreels E."/>
            <person name="Rieger M."/>
            <person name="Schaefer M."/>
            <person name="Mueller-Auer S."/>
            <person name="Gabel C."/>
            <person name="Fuchs M."/>
            <person name="Duesterhoeft A."/>
            <person name="Fritzc C."/>
            <person name="Holzer E."/>
            <person name="Moestl D."/>
            <person name="Hilbert H."/>
            <person name="Borzym K."/>
            <person name="Langer I."/>
            <person name="Beck A."/>
            <person name="Lehrach H."/>
            <person name="Reinhardt R."/>
            <person name="Pohl T.M."/>
            <person name="Eger P."/>
            <person name="Zimmermann W."/>
            <person name="Wedler H."/>
            <person name="Wambutt R."/>
            <person name="Purnelle B."/>
            <person name="Goffeau A."/>
            <person name="Cadieu E."/>
            <person name="Dreano S."/>
            <person name="Gloux S."/>
            <person name="Lelaure V."/>
            <person name="Mottier S."/>
            <person name="Galibert F."/>
            <person name="Aves S.J."/>
            <person name="Xiang Z."/>
            <person name="Hunt C."/>
            <person name="Moore K."/>
            <person name="Hurst S.M."/>
            <person name="Lucas M."/>
            <person name="Rochet M."/>
            <person name="Gaillardin C."/>
            <person name="Tallada V.A."/>
            <person name="Garzon A."/>
            <person name="Thode G."/>
            <person name="Daga R.R."/>
            <person name="Cruzado L."/>
            <person name="Jimenez J."/>
            <person name="Sanchez M."/>
            <person name="del Rey F."/>
            <person name="Benito J."/>
            <person name="Dominguez A."/>
            <person name="Revuelta J.L."/>
            <person name="Moreno S."/>
            <person name="Armstrong J."/>
            <person name="Forsburg S.L."/>
            <person name="Cerutti L."/>
            <person name="Lowe T."/>
            <person name="McCombie W.R."/>
            <person name="Paulsen I."/>
            <person name="Potashkin J."/>
            <person name="Shpakovski G.V."/>
            <person name="Ussery D."/>
            <person name="Barrell B.G."/>
            <person name="Nurse P."/>
        </authorList>
    </citation>
    <scope>NUCLEOTIDE SEQUENCE [LARGE SCALE GENOMIC DNA]</scope>
    <source>
        <strain>972 / ATCC 24843</strain>
    </source>
</reference>
<reference key="2">
    <citation type="journal article" date="2011" name="Science">
        <title>Comparative functional genomics of the fission yeasts.</title>
        <authorList>
            <person name="Rhind N."/>
            <person name="Chen Z."/>
            <person name="Yassour M."/>
            <person name="Thompson D.A."/>
            <person name="Haas B.J."/>
            <person name="Habib N."/>
            <person name="Wapinski I."/>
            <person name="Roy S."/>
            <person name="Lin M.F."/>
            <person name="Heiman D.I."/>
            <person name="Young S.K."/>
            <person name="Furuya K."/>
            <person name="Guo Y."/>
            <person name="Pidoux A."/>
            <person name="Chen H.M."/>
            <person name="Robbertse B."/>
            <person name="Goldberg J.M."/>
            <person name="Aoki K."/>
            <person name="Bayne E.H."/>
            <person name="Berlin A.M."/>
            <person name="Desjardins C.A."/>
            <person name="Dobbs E."/>
            <person name="Dukaj L."/>
            <person name="Fan L."/>
            <person name="FitzGerald M.G."/>
            <person name="French C."/>
            <person name="Gujja S."/>
            <person name="Hansen K."/>
            <person name="Keifenheim D."/>
            <person name="Levin J.Z."/>
            <person name="Mosher R.A."/>
            <person name="Mueller C.A."/>
            <person name="Pfiffner J."/>
            <person name="Priest M."/>
            <person name="Russ C."/>
            <person name="Smialowska A."/>
            <person name="Swoboda P."/>
            <person name="Sykes S.M."/>
            <person name="Vaughn M."/>
            <person name="Vengrova S."/>
            <person name="Yoder R."/>
            <person name="Zeng Q."/>
            <person name="Allshire R."/>
            <person name="Baulcombe D."/>
            <person name="Birren B.W."/>
            <person name="Brown W."/>
            <person name="Ekwall K."/>
            <person name="Kellis M."/>
            <person name="Leatherwood J."/>
            <person name="Levin H."/>
            <person name="Margalit H."/>
            <person name="Martienssen R."/>
            <person name="Nieduszynski C.A."/>
            <person name="Spatafora J.W."/>
            <person name="Friedman N."/>
            <person name="Dalgaard J.Z."/>
            <person name="Baumann P."/>
            <person name="Niki H."/>
            <person name="Regev A."/>
            <person name="Nusbaum C."/>
        </authorList>
    </citation>
    <scope>REVISION OF GENE MODEL</scope>
</reference>
<reference key="3">
    <citation type="journal article" date="2006" name="Nat. Biotechnol.">
        <title>ORFeome cloning and global analysis of protein localization in the fission yeast Schizosaccharomyces pombe.</title>
        <authorList>
            <person name="Matsuyama A."/>
            <person name="Arai R."/>
            <person name="Yashiroda Y."/>
            <person name="Shirai A."/>
            <person name="Kamata A."/>
            <person name="Sekido S."/>
            <person name="Kobayashi Y."/>
            <person name="Hashimoto A."/>
            <person name="Hamamoto M."/>
            <person name="Hiraoka Y."/>
            <person name="Horinouchi S."/>
            <person name="Yoshida M."/>
        </authorList>
    </citation>
    <scope>SUBCELLULAR LOCATION [LARGE SCALE ANALYSIS]</scope>
</reference>
<reference key="4">
    <citation type="journal article" date="2008" name="J. Proteome Res.">
        <title>Phosphoproteome analysis of fission yeast.</title>
        <authorList>
            <person name="Wilson-Grady J.T."/>
            <person name="Villen J."/>
            <person name="Gygi S.P."/>
        </authorList>
    </citation>
    <scope>PHOSPHORYLATION [LARGE SCALE ANALYSIS] AT SER-567</scope>
    <scope>IDENTIFICATION BY MASS SPECTROMETRY</scope>
</reference>
<evidence type="ECO:0000256" key="1">
    <source>
        <dbReference type="SAM" id="MobiDB-lite"/>
    </source>
</evidence>
<evidence type="ECO:0000269" key="2">
    <source>
    </source>
</evidence>
<evidence type="ECO:0000269" key="3">
    <source>
    </source>
</evidence>
<sequence length="845" mass="93695">MKRKSSHYNDAHASHINEDIEESYKDLYNNLSPSSTILLLLYARWFPATLIHFLDKYYTSTPILIDMIHKQCIYNPPKGSLHVQLEYYLAFLNRMALIFDRFPDLFPTEISKVKFFTKDFSKKDKLTALDTYRSFPGSTWKTIVTFATQEVFYLPEGLEPLKRDFSSMDKLKLIGKITYKLRLKGDTALKFAYLHAPSDVRDKVFDDAFWQEIITPKASLEQQSNNIPTGIQDSSKYTVNGPTERDNKSMKSFVRSFFTSTDSSVADTTIIPSMTQQFDKDPSTLVQSSIDKEIQVKEDGTTSSVAVNAETAVQNVNGTIKESQGTESISFASKNNSAPSADANNGNMTKLVSKEKAFLNTVTTPNADLIISEEDELTEMTLRTANGSEPTKKSNRSEQSKTVANTNVGSKNGTTPRSFAQKSSKRIKPTEGSANLNTVTELTGIGSRIAMNGSSVKASNISTEKSKTIAKPKPAKELSPQATLNSPIQSAEAGNVELKLHPQTPDRIVKVERKVHSLNMTLRSPKAGSAGKENSWRSKYLSEGKNSKAKYTAKQPSYDRAGSSLASPTKSSASPLVKAPKETPERLCTENQSTENEDQANLKESELPKEKSDIQPKNSRSTIEYIETSTRVYEMPKDTIPSRFKTSISTEVHDGRLKKYPYYHVKTPEKGTTVVSRTVTSPKSGAYASPSKASYNQDSSPNASLEQCFVQRSPSKMLTTLRNNSSTFPSLRKNAMIARKSTADSLSSPKRQSVPSTPKASLSPRVHKSMTYSPSEASPLYANKSPKSSTMVPLMKYKSGLNEGMRTSSIYSSTSSPYIRDQYFLNRMLTNGSHNGSPSWRDGLL</sequence>
<accession>O94358</accession>
<name>YHOA_SCHPO</name>
<organism>
    <name type="scientific">Schizosaccharomyces pombe (strain 972 / ATCC 24843)</name>
    <name type="common">Fission yeast</name>
    <dbReference type="NCBI Taxonomy" id="284812"/>
    <lineage>
        <taxon>Eukaryota</taxon>
        <taxon>Fungi</taxon>
        <taxon>Dikarya</taxon>
        <taxon>Ascomycota</taxon>
        <taxon>Taphrinomycotina</taxon>
        <taxon>Schizosaccharomycetes</taxon>
        <taxon>Schizosaccharomycetales</taxon>
        <taxon>Schizosaccharomycetaceae</taxon>
        <taxon>Schizosaccharomyces</taxon>
    </lineage>
</organism>
<gene>
    <name type="ORF">SPBC428.10</name>
</gene>
<keyword id="KW-0496">Mitochondrion</keyword>
<keyword id="KW-0597">Phosphoprotein</keyword>
<keyword id="KW-1185">Reference proteome</keyword>
<protein>
    <recommendedName>
        <fullName>Uncharacterized protein C428.10</fullName>
    </recommendedName>
</protein>
<dbReference type="EMBL" id="CU329671">
    <property type="protein sequence ID" value="CAA22285.2"/>
    <property type="molecule type" value="Genomic_DNA"/>
</dbReference>
<dbReference type="PIR" id="T40462">
    <property type="entry name" value="T40462"/>
</dbReference>
<dbReference type="RefSeq" id="NP_595188.2">
    <property type="nucleotide sequence ID" value="NM_001021095.2"/>
</dbReference>
<dbReference type="BioGRID" id="277336">
    <property type="interactions" value="3"/>
</dbReference>
<dbReference type="STRING" id="284812.O94358"/>
<dbReference type="iPTMnet" id="O94358"/>
<dbReference type="PaxDb" id="4896-SPBC428.10.1"/>
<dbReference type="EnsemblFungi" id="SPBC428.10.1">
    <property type="protein sequence ID" value="SPBC428.10.1:pep"/>
    <property type="gene ID" value="SPBC428.10"/>
</dbReference>
<dbReference type="KEGG" id="spo:2540818"/>
<dbReference type="PomBase" id="SPBC428.10"/>
<dbReference type="VEuPathDB" id="FungiDB:SPBC428.10"/>
<dbReference type="HOGENOM" id="CLU_337123_0_0_1"/>
<dbReference type="InParanoid" id="O94358"/>
<dbReference type="PRO" id="PR:O94358"/>
<dbReference type="Proteomes" id="UP000002485">
    <property type="component" value="Chromosome II"/>
</dbReference>
<dbReference type="GO" id="GO:0005739">
    <property type="term" value="C:mitochondrion"/>
    <property type="evidence" value="ECO:0007005"/>
    <property type="project" value="PomBase"/>
</dbReference>
<feature type="chain" id="PRO_0000304015" description="Uncharacterized protein C428.10">
    <location>
        <begin position="1"/>
        <end position="845"/>
    </location>
</feature>
<feature type="region of interest" description="Disordered" evidence="1">
    <location>
        <begin position="224"/>
        <end position="244"/>
    </location>
</feature>
<feature type="region of interest" description="Disordered" evidence="1">
    <location>
        <begin position="324"/>
        <end position="346"/>
    </location>
</feature>
<feature type="region of interest" description="Disordered" evidence="1">
    <location>
        <begin position="383"/>
        <end position="434"/>
    </location>
</feature>
<feature type="region of interest" description="Disordered" evidence="1">
    <location>
        <begin position="456"/>
        <end position="485"/>
    </location>
</feature>
<feature type="region of interest" description="Disordered" evidence="1">
    <location>
        <begin position="519"/>
        <end position="619"/>
    </location>
</feature>
<feature type="region of interest" description="Disordered" evidence="1">
    <location>
        <begin position="674"/>
        <end position="701"/>
    </location>
</feature>
<feature type="region of interest" description="Disordered" evidence="1">
    <location>
        <begin position="739"/>
        <end position="785"/>
    </location>
</feature>
<feature type="compositionally biased region" description="Polar residues" evidence="1">
    <location>
        <begin position="224"/>
        <end position="241"/>
    </location>
</feature>
<feature type="compositionally biased region" description="Basic and acidic residues" evidence="1">
    <location>
        <begin position="390"/>
        <end position="399"/>
    </location>
</feature>
<feature type="compositionally biased region" description="Polar residues" evidence="1">
    <location>
        <begin position="400"/>
        <end position="422"/>
    </location>
</feature>
<feature type="compositionally biased region" description="Basic and acidic residues" evidence="1">
    <location>
        <begin position="534"/>
        <end position="546"/>
    </location>
</feature>
<feature type="compositionally biased region" description="Low complexity" evidence="1">
    <location>
        <begin position="563"/>
        <end position="576"/>
    </location>
</feature>
<feature type="compositionally biased region" description="Basic and acidic residues" evidence="1">
    <location>
        <begin position="579"/>
        <end position="588"/>
    </location>
</feature>
<feature type="compositionally biased region" description="Basic and acidic residues" evidence="1">
    <location>
        <begin position="600"/>
        <end position="614"/>
    </location>
</feature>
<feature type="compositionally biased region" description="Polar residues" evidence="1">
    <location>
        <begin position="674"/>
        <end position="683"/>
    </location>
</feature>
<feature type="compositionally biased region" description="Polar residues" evidence="1">
    <location>
        <begin position="691"/>
        <end position="701"/>
    </location>
</feature>
<feature type="compositionally biased region" description="Polar residues" evidence="1">
    <location>
        <begin position="743"/>
        <end position="760"/>
    </location>
</feature>
<feature type="modified residue" description="Phosphoserine" evidence="3">
    <location>
        <position position="567"/>
    </location>
</feature>
<proteinExistence type="evidence at protein level"/>
<comment type="subcellular location">
    <subcellularLocation>
        <location evidence="2">Mitochondrion</location>
    </subcellularLocation>
</comment>